<protein>
    <recommendedName>
        <fullName evidence="5">Leucine-rich repeat-containing protein 39</fullName>
    </recommendedName>
    <alternativeName>
        <fullName evidence="4">Myosin-interacting M-band-associated stress-responsive protein</fullName>
        <shortName evidence="4">Myomasp</shortName>
    </alternativeName>
</protein>
<accession>D3ZXS4</accession>
<dbReference type="EMBL" id="AC119448">
    <property type="status" value="NOT_ANNOTATED_CDS"/>
    <property type="molecule type" value="Genomic_DNA"/>
</dbReference>
<dbReference type="EMBL" id="CH473952">
    <property type="protein sequence ID" value="EDL82035.1"/>
    <property type="molecule type" value="Genomic_DNA"/>
</dbReference>
<dbReference type="RefSeq" id="NP_001103107.1">
    <property type="nucleotide sequence ID" value="NM_001109637.1"/>
</dbReference>
<dbReference type="RefSeq" id="XP_006233293.1">
    <property type="nucleotide sequence ID" value="XM_006233231.3"/>
</dbReference>
<dbReference type="RefSeq" id="XP_063138661.1">
    <property type="nucleotide sequence ID" value="XM_063282591.1"/>
</dbReference>
<dbReference type="SMR" id="D3ZXS4"/>
<dbReference type="FunCoup" id="D3ZXS4">
    <property type="interactions" value="7"/>
</dbReference>
<dbReference type="STRING" id="10116.ENSRNOP00000020297"/>
<dbReference type="PhosphoSitePlus" id="D3ZXS4"/>
<dbReference type="PaxDb" id="10116-ENSRNOP00000020297"/>
<dbReference type="Ensembl" id="ENSRNOT00000020297.6">
    <property type="protein sequence ID" value="ENSRNOP00000020297.5"/>
    <property type="gene ID" value="ENSRNOG00000015117.6"/>
</dbReference>
<dbReference type="GeneID" id="691307"/>
<dbReference type="KEGG" id="rno:691307"/>
<dbReference type="UCSC" id="RGD:1585106">
    <property type="organism name" value="rat"/>
</dbReference>
<dbReference type="AGR" id="RGD:1585106"/>
<dbReference type="CTD" id="127495"/>
<dbReference type="RGD" id="1585106">
    <property type="gene designation" value="Lrrc39"/>
</dbReference>
<dbReference type="eggNOG" id="KOG0619">
    <property type="taxonomic scope" value="Eukaryota"/>
</dbReference>
<dbReference type="GeneTree" id="ENSGT00940000158998"/>
<dbReference type="HOGENOM" id="CLU_000288_18_8_1"/>
<dbReference type="InParanoid" id="D3ZXS4"/>
<dbReference type="OMA" id="DMPALEW"/>
<dbReference type="OrthoDB" id="442066at2759"/>
<dbReference type="PhylomeDB" id="D3ZXS4"/>
<dbReference type="TreeFam" id="TF333627"/>
<dbReference type="PRO" id="PR:D3ZXS4"/>
<dbReference type="Proteomes" id="UP000002494">
    <property type="component" value="Chromosome 2"/>
</dbReference>
<dbReference type="Proteomes" id="UP000234681">
    <property type="component" value="Chromosome 2"/>
</dbReference>
<dbReference type="Bgee" id="ENSRNOG00000015117">
    <property type="expression patterns" value="Expressed in heart and 16 other cell types or tissues"/>
</dbReference>
<dbReference type="GO" id="GO:0031430">
    <property type="term" value="C:M band"/>
    <property type="evidence" value="ECO:0007669"/>
    <property type="project" value="UniProtKB-SubCell"/>
</dbReference>
<dbReference type="GO" id="GO:0035556">
    <property type="term" value="P:intracellular signal transduction"/>
    <property type="evidence" value="ECO:0000318"/>
    <property type="project" value="GO_Central"/>
</dbReference>
<dbReference type="FunFam" id="3.80.10.10:FF:000248">
    <property type="entry name" value="Leucine rich repeat containing 39"/>
    <property type="match status" value="1"/>
</dbReference>
<dbReference type="FunFam" id="3.80.10.10:FF:000249">
    <property type="entry name" value="Leucine rich repeat containing 39"/>
    <property type="match status" value="1"/>
</dbReference>
<dbReference type="Gene3D" id="3.80.10.10">
    <property type="entry name" value="Ribonuclease Inhibitor"/>
    <property type="match status" value="2"/>
</dbReference>
<dbReference type="InterPro" id="IPR001611">
    <property type="entry name" value="Leu-rich_rpt"/>
</dbReference>
<dbReference type="InterPro" id="IPR003591">
    <property type="entry name" value="Leu-rich_rpt_typical-subtyp"/>
</dbReference>
<dbReference type="InterPro" id="IPR032675">
    <property type="entry name" value="LRR_dom_sf"/>
</dbReference>
<dbReference type="InterPro" id="IPR050216">
    <property type="entry name" value="LRR_domain-containing"/>
</dbReference>
<dbReference type="InterPro" id="IPR055414">
    <property type="entry name" value="LRR_R13L4/SHOC2-like"/>
</dbReference>
<dbReference type="PANTHER" id="PTHR48051">
    <property type="match status" value="1"/>
</dbReference>
<dbReference type="PANTHER" id="PTHR48051:SF2">
    <property type="entry name" value="LEUCINE RICH REPEAT CONTAINING 39"/>
    <property type="match status" value="1"/>
</dbReference>
<dbReference type="Pfam" id="PF23598">
    <property type="entry name" value="LRR_14"/>
    <property type="match status" value="1"/>
</dbReference>
<dbReference type="Pfam" id="PF13855">
    <property type="entry name" value="LRR_8"/>
    <property type="match status" value="1"/>
</dbReference>
<dbReference type="SMART" id="SM00369">
    <property type="entry name" value="LRR_TYP"/>
    <property type="match status" value="6"/>
</dbReference>
<dbReference type="SUPFAM" id="SSF52058">
    <property type="entry name" value="L domain-like"/>
    <property type="match status" value="1"/>
</dbReference>
<dbReference type="PROSITE" id="PS51450">
    <property type="entry name" value="LRR"/>
    <property type="match status" value="7"/>
</dbReference>
<reference key="1">
    <citation type="journal article" date="2004" name="Nature">
        <title>Genome sequence of the Brown Norway rat yields insights into mammalian evolution.</title>
        <authorList>
            <person name="Gibbs R.A."/>
            <person name="Weinstock G.M."/>
            <person name="Metzker M.L."/>
            <person name="Muzny D.M."/>
            <person name="Sodergren E.J."/>
            <person name="Scherer S."/>
            <person name="Scott G."/>
            <person name="Steffen D."/>
            <person name="Worley K.C."/>
            <person name="Burch P.E."/>
            <person name="Okwuonu G."/>
            <person name="Hines S."/>
            <person name="Lewis L."/>
            <person name="Deramo C."/>
            <person name="Delgado O."/>
            <person name="Dugan-Rocha S."/>
            <person name="Miner G."/>
            <person name="Morgan M."/>
            <person name="Hawes A."/>
            <person name="Gill R."/>
            <person name="Holt R.A."/>
            <person name="Adams M.D."/>
            <person name="Amanatides P.G."/>
            <person name="Baden-Tillson H."/>
            <person name="Barnstead M."/>
            <person name="Chin S."/>
            <person name="Evans C.A."/>
            <person name="Ferriera S."/>
            <person name="Fosler C."/>
            <person name="Glodek A."/>
            <person name="Gu Z."/>
            <person name="Jennings D."/>
            <person name="Kraft C.L."/>
            <person name="Nguyen T."/>
            <person name="Pfannkoch C.M."/>
            <person name="Sitter C."/>
            <person name="Sutton G.G."/>
            <person name="Venter J.C."/>
            <person name="Woodage T."/>
            <person name="Smith D."/>
            <person name="Lee H.-M."/>
            <person name="Gustafson E."/>
            <person name="Cahill P."/>
            <person name="Kana A."/>
            <person name="Doucette-Stamm L."/>
            <person name="Weinstock K."/>
            <person name="Fechtel K."/>
            <person name="Weiss R.B."/>
            <person name="Dunn D.M."/>
            <person name="Green E.D."/>
            <person name="Blakesley R.W."/>
            <person name="Bouffard G.G."/>
            <person name="De Jong P.J."/>
            <person name="Osoegawa K."/>
            <person name="Zhu B."/>
            <person name="Marra M."/>
            <person name="Schein J."/>
            <person name="Bosdet I."/>
            <person name="Fjell C."/>
            <person name="Jones S."/>
            <person name="Krzywinski M."/>
            <person name="Mathewson C."/>
            <person name="Siddiqui A."/>
            <person name="Wye N."/>
            <person name="McPherson J."/>
            <person name="Zhao S."/>
            <person name="Fraser C.M."/>
            <person name="Shetty J."/>
            <person name="Shatsman S."/>
            <person name="Geer K."/>
            <person name="Chen Y."/>
            <person name="Abramzon S."/>
            <person name="Nierman W.C."/>
            <person name="Havlak P.H."/>
            <person name="Chen R."/>
            <person name="Durbin K.J."/>
            <person name="Egan A."/>
            <person name="Ren Y."/>
            <person name="Song X.-Z."/>
            <person name="Li B."/>
            <person name="Liu Y."/>
            <person name="Qin X."/>
            <person name="Cawley S."/>
            <person name="Cooney A.J."/>
            <person name="D'Souza L.M."/>
            <person name="Martin K."/>
            <person name="Wu J.Q."/>
            <person name="Gonzalez-Garay M.L."/>
            <person name="Jackson A.R."/>
            <person name="Kalafus K.J."/>
            <person name="McLeod M.P."/>
            <person name="Milosavljevic A."/>
            <person name="Virk D."/>
            <person name="Volkov A."/>
            <person name="Wheeler D.A."/>
            <person name="Zhang Z."/>
            <person name="Bailey J.A."/>
            <person name="Eichler E.E."/>
            <person name="Tuzun E."/>
            <person name="Birney E."/>
            <person name="Mongin E."/>
            <person name="Ureta-Vidal A."/>
            <person name="Woodwark C."/>
            <person name="Zdobnov E."/>
            <person name="Bork P."/>
            <person name="Suyama M."/>
            <person name="Torrents D."/>
            <person name="Alexandersson M."/>
            <person name="Trask B.J."/>
            <person name="Young J.M."/>
            <person name="Huang H."/>
            <person name="Wang H."/>
            <person name="Xing H."/>
            <person name="Daniels S."/>
            <person name="Gietzen D."/>
            <person name="Schmidt J."/>
            <person name="Stevens K."/>
            <person name="Vitt U."/>
            <person name="Wingrove J."/>
            <person name="Camara F."/>
            <person name="Mar Alba M."/>
            <person name="Abril J.F."/>
            <person name="Guigo R."/>
            <person name="Smit A."/>
            <person name="Dubchak I."/>
            <person name="Rubin E.M."/>
            <person name="Couronne O."/>
            <person name="Poliakov A."/>
            <person name="Huebner N."/>
            <person name="Ganten D."/>
            <person name="Goesele C."/>
            <person name="Hummel O."/>
            <person name="Kreitler T."/>
            <person name="Lee Y.-A."/>
            <person name="Monti J."/>
            <person name="Schulz H."/>
            <person name="Zimdahl H."/>
            <person name="Himmelbauer H."/>
            <person name="Lehrach H."/>
            <person name="Jacob H.J."/>
            <person name="Bromberg S."/>
            <person name="Gullings-Handley J."/>
            <person name="Jensen-Seaman M.I."/>
            <person name="Kwitek A.E."/>
            <person name="Lazar J."/>
            <person name="Pasko D."/>
            <person name="Tonellato P.J."/>
            <person name="Twigger S."/>
            <person name="Ponting C.P."/>
            <person name="Duarte J.M."/>
            <person name="Rice S."/>
            <person name="Goodstadt L."/>
            <person name="Beatson S.A."/>
            <person name="Emes R.D."/>
            <person name="Winter E.E."/>
            <person name="Webber C."/>
            <person name="Brandt P."/>
            <person name="Nyakatura G."/>
            <person name="Adetobi M."/>
            <person name="Chiaromonte F."/>
            <person name="Elnitski L."/>
            <person name="Eswara P."/>
            <person name="Hardison R.C."/>
            <person name="Hou M."/>
            <person name="Kolbe D."/>
            <person name="Makova K."/>
            <person name="Miller W."/>
            <person name="Nekrutenko A."/>
            <person name="Riemer C."/>
            <person name="Schwartz S."/>
            <person name="Taylor J."/>
            <person name="Yang S."/>
            <person name="Zhang Y."/>
            <person name="Lindpaintner K."/>
            <person name="Andrews T.D."/>
            <person name="Caccamo M."/>
            <person name="Clamp M."/>
            <person name="Clarke L."/>
            <person name="Curwen V."/>
            <person name="Durbin R.M."/>
            <person name="Eyras E."/>
            <person name="Searle S.M."/>
            <person name="Cooper G.M."/>
            <person name="Batzoglou S."/>
            <person name="Brudno M."/>
            <person name="Sidow A."/>
            <person name="Stone E.A."/>
            <person name="Payseur B.A."/>
            <person name="Bourque G."/>
            <person name="Lopez-Otin C."/>
            <person name="Puente X.S."/>
            <person name="Chakrabarti K."/>
            <person name="Chatterji S."/>
            <person name="Dewey C."/>
            <person name="Pachter L."/>
            <person name="Bray N."/>
            <person name="Yap V.B."/>
            <person name="Caspi A."/>
            <person name="Tesler G."/>
            <person name="Pevzner P.A."/>
            <person name="Haussler D."/>
            <person name="Roskin K.M."/>
            <person name="Baertsch R."/>
            <person name="Clawson H."/>
            <person name="Furey T.S."/>
            <person name="Hinrichs A.S."/>
            <person name="Karolchik D."/>
            <person name="Kent W.J."/>
            <person name="Rosenbloom K.R."/>
            <person name="Trumbower H."/>
            <person name="Weirauch M."/>
            <person name="Cooper D.N."/>
            <person name="Stenson P.D."/>
            <person name="Ma B."/>
            <person name="Brent M."/>
            <person name="Arumugam M."/>
            <person name="Shteynberg D."/>
            <person name="Copley R.R."/>
            <person name="Taylor M.S."/>
            <person name="Riethman H."/>
            <person name="Mudunuri U."/>
            <person name="Peterson J."/>
            <person name="Guyer M."/>
            <person name="Felsenfeld A."/>
            <person name="Old S."/>
            <person name="Mockrin S."/>
            <person name="Collins F.S."/>
        </authorList>
    </citation>
    <scope>NUCLEOTIDE SEQUENCE [LARGE SCALE GENOMIC DNA]</scope>
    <source>
        <strain>Brown Norway</strain>
    </source>
</reference>
<reference key="2">
    <citation type="submission" date="2005-07" db="EMBL/GenBank/DDBJ databases">
        <authorList>
            <person name="Mural R.J."/>
            <person name="Adams M.D."/>
            <person name="Myers E.W."/>
            <person name="Smith H.O."/>
            <person name="Venter J.C."/>
        </authorList>
    </citation>
    <scope>NUCLEOTIDE SEQUENCE [LARGE SCALE GENOMIC DNA]</scope>
    <source>
        <strain>Brown Norway</strain>
    </source>
</reference>
<reference key="3">
    <citation type="journal article" date="2010" name="Circ. Res.">
        <title>Myomasp/LRRC39, a heart- and muscle-specific protein, is a novel component of the sarcomeric M-band and is involved in stretch sensing.</title>
        <authorList>
            <person name="Will R.D."/>
            <person name="Eden M."/>
            <person name="Just S."/>
            <person name="Hansen A."/>
            <person name="Eder A."/>
            <person name="Frank D."/>
            <person name="Kuhn C."/>
            <person name="Seeger T.S."/>
            <person name="Oehl U."/>
            <person name="Wiemann S."/>
            <person name="Korn B."/>
            <person name="Koegl M."/>
            <person name="Rottbauer W."/>
            <person name="Eschenhagen T."/>
            <person name="Katus H.A."/>
            <person name="Frey N."/>
        </authorList>
    </citation>
    <scope>FUNCTION</scope>
    <scope>SUBCELLULAR LOCATION</scope>
    <scope>TISSUE SPECIFICITY</scope>
    <scope>INDUCTION</scope>
</reference>
<evidence type="ECO:0000250" key="1">
    <source>
        <dbReference type="UniProtKB" id="Q96DD0"/>
    </source>
</evidence>
<evidence type="ECO:0000255" key="2"/>
<evidence type="ECO:0000269" key="3">
    <source>
    </source>
</evidence>
<evidence type="ECO:0000303" key="4">
    <source>
    </source>
</evidence>
<evidence type="ECO:0000305" key="5"/>
<evidence type="ECO:0000312" key="6">
    <source>
        <dbReference type="RGD" id="1585106"/>
    </source>
</evidence>
<comment type="function">
    <text evidence="3">Component of the sarcomeric M-band which plays a role in myocyte response to biomechanical stress. May regulate expression of other M-band proteins via an SRF-dependent pathway. Important for normal contractile function in heart.</text>
</comment>
<comment type="subunit">
    <text evidence="1">Interacts with MYH7 (via C-terminus).</text>
</comment>
<comment type="subcellular location">
    <subcellularLocation>
        <location evidence="3">Cytoplasm</location>
        <location evidence="3">Myofibril</location>
        <location evidence="3">Sarcomere</location>
        <location evidence="3">M line</location>
    </subcellularLocation>
</comment>
<comment type="tissue specificity">
    <text evidence="3">Expressed in heart and skeletal muscle (at protein level). Also detected in kidney (at protein level). Not detected in other tissues tested (at protein level).</text>
</comment>
<comment type="induction">
    <text evidence="3">In cardiomyocytes, down-regulated in response to biomechanical stress.</text>
</comment>
<proteinExistence type="evidence at protein level"/>
<feature type="chain" id="PRO_0000441698" description="Leucine-rich repeat-containing protein 39">
    <location>
        <begin position="1"/>
        <end position="334"/>
    </location>
</feature>
<feature type="repeat" description="LRR 1" evidence="2">
    <location>
        <begin position="59"/>
        <end position="82"/>
    </location>
</feature>
<feature type="repeat" description="LRR 2" evidence="2">
    <location>
        <begin position="83"/>
        <end position="105"/>
    </location>
</feature>
<feature type="repeat" description="LRR 3" evidence="2">
    <location>
        <begin position="106"/>
        <end position="128"/>
    </location>
</feature>
<feature type="repeat" description="LRR 4" evidence="2">
    <location>
        <begin position="129"/>
        <end position="151"/>
    </location>
</feature>
<feature type="repeat" description="LRR 5" evidence="2">
    <location>
        <begin position="153"/>
        <end position="175"/>
    </location>
</feature>
<feature type="repeat" description="LRR 6" evidence="2">
    <location>
        <begin position="176"/>
        <end position="198"/>
    </location>
</feature>
<feature type="repeat" description="LRR 7" evidence="2">
    <location>
        <begin position="199"/>
        <end position="221"/>
    </location>
</feature>
<feature type="repeat" description="LRR 8" evidence="2">
    <location>
        <begin position="223"/>
        <end position="244"/>
    </location>
</feature>
<feature type="repeat" description="LRR 9" evidence="2">
    <location>
        <begin position="245"/>
        <end position="269"/>
    </location>
</feature>
<feature type="repeat" description="LRR 10" evidence="2">
    <location>
        <begin position="272"/>
        <end position="295"/>
    </location>
</feature>
<sequence>MTESVVCTGAVSTVKEVWEERIKKHHEDVKREKEFQQKLVRIWEDRVSLTKLKEKVTREDGRIILRIEKEEWKTLPSSLLKLNQLQEWQLHRTGLLKIPEFIGRFQHLIVLDLSRNTISEIPRGIGLLTRLQELILSYNKIKTVPKELSNCASLEKLELAVNRDISDLPTELSKLLKLTHLDLSMNQFTTIPLAVLDMPALEWLDMGSNSLQQLPDTLDRMQSLHTLWLQRNEITCLPETIRNMKNLGTLVLSNNKLQDIPGCMEEMTSLRFVNFRDNPLRLEVTLPPSDDVDGEEEQELFGLQFMHAYIQESRRTEDQVNCLTHTPSSTRSDG</sequence>
<name>LRC39_RAT</name>
<organism>
    <name type="scientific">Rattus norvegicus</name>
    <name type="common">Rat</name>
    <dbReference type="NCBI Taxonomy" id="10116"/>
    <lineage>
        <taxon>Eukaryota</taxon>
        <taxon>Metazoa</taxon>
        <taxon>Chordata</taxon>
        <taxon>Craniata</taxon>
        <taxon>Vertebrata</taxon>
        <taxon>Euteleostomi</taxon>
        <taxon>Mammalia</taxon>
        <taxon>Eutheria</taxon>
        <taxon>Euarchontoglires</taxon>
        <taxon>Glires</taxon>
        <taxon>Rodentia</taxon>
        <taxon>Myomorpha</taxon>
        <taxon>Muroidea</taxon>
        <taxon>Muridae</taxon>
        <taxon>Murinae</taxon>
        <taxon>Rattus</taxon>
    </lineage>
</organism>
<gene>
    <name evidence="6" type="primary">Lrrc39</name>
</gene>
<keyword id="KW-0963">Cytoplasm</keyword>
<keyword id="KW-0433">Leucine-rich repeat</keyword>
<keyword id="KW-0514">Muscle protein</keyword>
<keyword id="KW-1185">Reference proteome</keyword>
<keyword id="KW-0677">Repeat</keyword>